<gene>
    <name evidence="2" type="primary">infB</name>
    <name type="ordered locus">NIS_0421</name>
</gene>
<sequence length="843" mass="93415">MDKVRIHEIASELGLKSKDVLQKAQEMGLKVKSPSSGVSFEEAEKLTDYIINGPAEAVAAKPQEKPKKSAPKKEEKPKEEVKKEAEEKVAASKKEEEKPQEKKSVEESLTPPSLKKRRGLVIVKKKRPKVEPKVEEKEAKQETPQVTAEEETPLTLKRKPKKAKKSTPPAKKNEGKKIEILEDRDLSDVSMELEEEVVVLPDFSEELQKVEEEQKPKEPQKKNKQVKVARKSFAIEQQGISRSKKKKRKKKESKSETEIKVVELPEEVRVYEFAEKIGKSVGEVIKVLFNLGMMATKNDFLDKETLEILAEEFDVEIKIKNVLEELDYVKVYDAVEDDYLEERPPVITIMGHVDHGKTSLLDYIRNSKIAEREAGGITQHIGAYMIEKDGKRITFIDTPGHEAFTEMRARGAQATDIAIIVVAADDGVKPQTVEAVNHAKTADVPMIVAINKIDKPEANPDLVKSQLAEIGITPTEWGGEYEFVEVSAKTGQGVDDLLDTILLQAEIMELKANPKREAKAVVIESSLEKGRGPVATVIVKNGTLRVGDHVVCGVAFGRVRAIIDDLGKMIKERKPSEPGVVVGLDKVPPAGEILVAVKDAEEARMYAERRAEYERQKELSKTTKVSLEELSQLVKEGQLKKLPVIIKADTQGSLEAIKGSLEKLKNEEVKVDIIHAGVGAISESDVTLADASENAVILGFNVRPTGAVKEKAKQLGVNIKTYSIIYDLIDDVKALLSGMLSPIIKEEVIGQAEVRETFNVPKIGTVAGCLVTDGVIERNAKARVIRDGVVIYDSKISSLKRFKEDVREVTKGYECGLMIENFNDIKVGDVIEAYKEVEEAATL</sequence>
<accession>A6Q226</accession>
<evidence type="ECO:0000250" key="1"/>
<evidence type="ECO:0000255" key="2">
    <source>
        <dbReference type="HAMAP-Rule" id="MF_00100"/>
    </source>
</evidence>
<evidence type="ECO:0000256" key="3">
    <source>
        <dbReference type="SAM" id="MobiDB-lite"/>
    </source>
</evidence>
<keyword id="KW-0963">Cytoplasm</keyword>
<keyword id="KW-0342">GTP-binding</keyword>
<keyword id="KW-0396">Initiation factor</keyword>
<keyword id="KW-0547">Nucleotide-binding</keyword>
<keyword id="KW-0648">Protein biosynthesis</keyword>
<keyword id="KW-1185">Reference proteome</keyword>
<comment type="function">
    <text evidence="2">One of the essential components for the initiation of protein synthesis. Protects formylmethionyl-tRNA from spontaneous hydrolysis and promotes its binding to the 30S ribosomal subunits. Also involved in the hydrolysis of GTP during the formation of the 70S ribosomal complex.</text>
</comment>
<comment type="subcellular location">
    <subcellularLocation>
        <location evidence="2">Cytoplasm</location>
    </subcellularLocation>
</comment>
<comment type="similarity">
    <text evidence="2">Belongs to the TRAFAC class translation factor GTPase superfamily. Classic translation factor GTPase family. IF-2 subfamily.</text>
</comment>
<feature type="chain" id="PRO_1000008289" description="Translation initiation factor IF-2">
    <location>
        <begin position="1"/>
        <end position="843"/>
    </location>
</feature>
<feature type="domain" description="tr-type G">
    <location>
        <begin position="342"/>
        <end position="511"/>
    </location>
</feature>
<feature type="region of interest" description="Disordered" evidence="3">
    <location>
        <begin position="55"/>
        <end position="185"/>
    </location>
</feature>
<feature type="region of interest" description="Disordered" evidence="3">
    <location>
        <begin position="209"/>
        <end position="228"/>
    </location>
</feature>
<feature type="region of interest" description="G1" evidence="1">
    <location>
        <begin position="351"/>
        <end position="358"/>
    </location>
</feature>
<feature type="region of interest" description="G2" evidence="1">
    <location>
        <begin position="376"/>
        <end position="380"/>
    </location>
</feature>
<feature type="region of interest" description="G3" evidence="1">
    <location>
        <begin position="397"/>
        <end position="400"/>
    </location>
</feature>
<feature type="region of interest" description="G4" evidence="1">
    <location>
        <begin position="451"/>
        <end position="454"/>
    </location>
</feature>
<feature type="region of interest" description="G5" evidence="1">
    <location>
        <begin position="487"/>
        <end position="489"/>
    </location>
</feature>
<feature type="compositionally biased region" description="Basic and acidic residues" evidence="3">
    <location>
        <begin position="62"/>
        <end position="106"/>
    </location>
</feature>
<feature type="compositionally biased region" description="Basic residues" evidence="3">
    <location>
        <begin position="114"/>
        <end position="128"/>
    </location>
</feature>
<feature type="compositionally biased region" description="Basic and acidic residues" evidence="3">
    <location>
        <begin position="129"/>
        <end position="141"/>
    </location>
</feature>
<feature type="compositionally biased region" description="Basic residues" evidence="3">
    <location>
        <begin position="156"/>
        <end position="165"/>
    </location>
</feature>
<feature type="compositionally biased region" description="Basic and acidic residues" evidence="3">
    <location>
        <begin position="171"/>
        <end position="185"/>
    </location>
</feature>
<feature type="compositionally biased region" description="Basic and acidic residues" evidence="3">
    <location>
        <begin position="209"/>
        <end position="221"/>
    </location>
</feature>
<feature type="binding site" evidence="2">
    <location>
        <begin position="351"/>
        <end position="358"/>
    </location>
    <ligand>
        <name>GTP</name>
        <dbReference type="ChEBI" id="CHEBI:37565"/>
    </ligand>
</feature>
<feature type="binding site" evidence="2">
    <location>
        <begin position="397"/>
        <end position="401"/>
    </location>
    <ligand>
        <name>GTP</name>
        <dbReference type="ChEBI" id="CHEBI:37565"/>
    </ligand>
</feature>
<feature type="binding site" evidence="2">
    <location>
        <begin position="451"/>
        <end position="454"/>
    </location>
    <ligand>
        <name>GTP</name>
        <dbReference type="ChEBI" id="CHEBI:37565"/>
    </ligand>
</feature>
<protein>
    <recommendedName>
        <fullName evidence="2">Translation initiation factor IF-2</fullName>
    </recommendedName>
</protein>
<organism>
    <name type="scientific">Nitratiruptor sp. (strain SB155-2)</name>
    <dbReference type="NCBI Taxonomy" id="387092"/>
    <lineage>
        <taxon>Bacteria</taxon>
        <taxon>Pseudomonadati</taxon>
        <taxon>Campylobacterota</taxon>
        <taxon>Epsilonproteobacteria</taxon>
        <taxon>Nautiliales</taxon>
        <taxon>Nitratiruptoraceae</taxon>
        <taxon>Nitratiruptor</taxon>
    </lineage>
</organism>
<reference key="1">
    <citation type="journal article" date="2007" name="Proc. Natl. Acad. Sci. U.S.A.">
        <title>Deep-sea vent epsilon-proteobacterial genomes provide insights into emergence of pathogens.</title>
        <authorList>
            <person name="Nakagawa S."/>
            <person name="Takaki Y."/>
            <person name="Shimamura S."/>
            <person name="Reysenbach A.-L."/>
            <person name="Takai K."/>
            <person name="Horikoshi K."/>
        </authorList>
    </citation>
    <scope>NUCLEOTIDE SEQUENCE [LARGE SCALE GENOMIC DNA]</scope>
    <source>
        <strain>SB155-2</strain>
    </source>
</reference>
<proteinExistence type="inferred from homology"/>
<dbReference type="EMBL" id="AP009178">
    <property type="protein sequence ID" value="BAF69535.1"/>
    <property type="molecule type" value="Genomic_DNA"/>
</dbReference>
<dbReference type="RefSeq" id="WP_012081798.1">
    <property type="nucleotide sequence ID" value="NC_009662.1"/>
</dbReference>
<dbReference type="SMR" id="A6Q226"/>
<dbReference type="FunCoup" id="A6Q226">
    <property type="interactions" value="496"/>
</dbReference>
<dbReference type="STRING" id="387092.NIS_0421"/>
<dbReference type="KEGG" id="nis:NIS_0421"/>
<dbReference type="eggNOG" id="COG0532">
    <property type="taxonomic scope" value="Bacteria"/>
</dbReference>
<dbReference type="HOGENOM" id="CLU_006301_4_1_7"/>
<dbReference type="InParanoid" id="A6Q226"/>
<dbReference type="OrthoDB" id="9811804at2"/>
<dbReference type="Proteomes" id="UP000001118">
    <property type="component" value="Chromosome"/>
</dbReference>
<dbReference type="GO" id="GO:0005829">
    <property type="term" value="C:cytosol"/>
    <property type="evidence" value="ECO:0007669"/>
    <property type="project" value="TreeGrafter"/>
</dbReference>
<dbReference type="GO" id="GO:0005525">
    <property type="term" value="F:GTP binding"/>
    <property type="evidence" value="ECO:0007669"/>
    <property type="project" value="UniProtKB-KW"/>
</dbReference>
<dbReference type="GO" id="GO:0003924">
    <property type="term" value="F:GTPase activity"/>
    <property type="evidence" value="ECO:0007669"/>
    <property type="project" value="UniProtKB-UniRule"/>
</dbReference>
<dbReference type="GO" id="GO:0003743">
    <property type="term" value="F:translation initiation factor activity"/>
    <property type="evidence" value="ECO:0007669"/>
    <property type="project" value="UniProtKB-UniRule"/>
</dbReference>
<dbReference type="CDD" id="cd01887">
    <property type="entry name" value="IF2_eIF5B"/>
    <property type="match status" value="1"/>
</dbReference>
<dbReference type="CDD" id="cd03702">
    <property type="entry name" value="IF2_mtIF2_II"/>
    <property type="match status" value="1"/>
</dbReference>
<dbReference type="CDD" id="cd03692">
    <property type="entry name" value="mtIF2_IVc"/>
    <property type="match status" value="1"/>
</dbReference>
<dbReference type="FunFam" id="2.40.30.10:FF:000008">
    <property type="entry name" value="Translation initiation factor IF-2"/>
    <property type="match status" value="1"/>
</dbReference>
<dbReference type="FunFam" id="2.40.30.10:FF:000054">
    <property type="entry name" value="Translation initiation factor IF-2"/>
    <property type="match status" value="1"/>
</dbReference>
<dbReference type="FunFam" id="3.40.50.10050:FF:000001">
    <property type="entry name" value="Translation initiation factor IF-2"/>
    <property type="match status" value="1"/>
</dbReference>
<dbReference type="FunFam" id="3.40.50.300:FF:000019">
    <property type="entry name" value="Translation initiation factor IF-2"/>
    <property type="match status" value="1"/>
</dbReference>
<dbReference type="Gene3D" id="1.10.10.2480">
    <property type="match status" value="1"/>
</dbReference>
<dbReference type="Gene3D" id="3.40.50.300">
    <property type="entry name" value="P-loop containing nucleotide triphosphate hydrolases"/>
    <property type="match status" value="1"/>
</dbReference>
<dbReference type="Gene3D" id="2.40.30.10">
    <property type="entry name" value="Translation factors"/>
    <property type="match status" value="2"/>
</dbReference>
<dbReference type="Gene3D" id="3.40.50.10050">
    <property type="entry name" value="Translation initiation factor IF- 2, domain 3"/>
    <property type="match status" value="1"/>
</dbReference>
<dbReference type="HAMAP" id="MF_00100_B">
    <property type="entry name" value="IF_2_B"/>
    <property type="match status" value="1"/>
</dbReference>
<dbReference type="InterPro" id="IPR053905">
    <property type="entry name" value="EF-G-like_DII"/>
</dbReference>
<dbReference type="InterPro" id="IPR004161">
    <property type="entry name" value="EFTu-like_2"/>
</dbReference>
<dbReference type="InterPro" id="IPR044145">
    <property type="entry name" value="IF2_II"/>
</dbReference>
<dbReference type="InterPro" id="IPR006847">
    <property type="entry name" value="IF2_N"/>
</dbReference>
<dbReference type="InterPro" id="IPR027417">
    <property type="entry name" value="P-loop_NTPase"/>
</dbReference>
<dbReference type="InterPro" id="IPR005225">
    <property type="entry name" value="Small_GTP-bd"/>
</dbReference>
<dbReference type="InterPro" id="IPR000795">
    <property type="entry name" value="T_Tr_GTP-bd_dom"/>
</dbReference>
<dbReference type="InterPro" id="IPR000178">
    <property type="entry name" value="TF_IF2_bacterial-like"/>
</dbReference>
<dbReference type="InterPro" id="IPR015760">
    <property type="entry name" value="TIF_IF2"/>
</dbReference>
<dbReference type="InterPro" id="IPR023115">
    <property type="entry name" value="TIF_IF2_dom3"/>
</dbReference>
<dbReference type="InterPro" id="IPR036925">
    <property type="entry name" value="TIF_IF2_dom3_sf"/>
</dbReference>
<dbReference type="InterPro" id="IPR009000">
    <property type="entry name" value="Transl_B-barrel_sf"/>
</dbReference>
<dbReference type="NCBIfam" id="TIGR00487">
    <property type="entry name" value="IF-2"/>
    <property type="match status" value="1"/>
</dbReference>
<dbReference type="NCBIfam" id="TIGR00231">
    <property type="entry name" value="small_GTP"/>
    <property type="match status" value="1"/>
</dbReference>
<dbReference type="PANTHER" id="PTHR43381:SF5">
    <property type="entry name" value="TR-TYPE G DOMAIN-CONTAINING PROTEIN"/>
    <property type="match status" value="1"/>
</dbReference>
<dbReference type="PANTHER" id="PTHR43381">
    <property type="entry name" value="TRANSLATION INITIATION FACTOR IF-2-RELATED"/>
    <property type="match status" value="1"/>
</dbReference>
<dbReference type="Pfam" id="PF22042">
    <property type="entry name" value="EF-G_D2"/>
    <property type="match status" value="1"/>
</dbReference>
<dbReference type="Pfam" id="PF00009">
    <property type="entry name" value="GTP_EFTU"/>
    <property type="match status" value="1"/>
</dbReference>
<dbReference type="Pfam" id="PF03144">
    <property type="entry name" value="GTP_EFTU_D2"/>
    <property type="match status" value="1"/>
</dbReference>
<dbReference type="Pfam" id="PF11987">
    <property type="entry name" value="IF-2"/>
    <property type="match status" value="1"/>
</dbReference>
<dbReference type="Pfam" id="PF04760">
    <property type="entry name" value="IF2_N"/>
    <property type="match status" value="2"/>
</dbReference>
<dbReference type="PRINTS" id="PR00449">
    <property type="entry name" value="RASTRNSFRMNG"/>
</dbReference>
<dbReference type="SUPFAM" id="SSF52156">
    <property type="entry name" value="Initiation factor IF2/eIF5b, domain 3"/>
    <property type="match status" value="1"/>
</dbReference>
<dbReference type="SUPFAM" id="SSF52540">
    <property type="entry name" value="P-loop containing nucleoside triphosphate hydrolases"/>
    <property type="match status" value="1"/>
</dbReference>
<dbReference type="SUPFAM" id="SSF50447">
    <property type="entry name" value="Translation proteins"/>
    <property type="match status" value="2"/>
</dbReference>
<dbReference type="PROSITE" id="PS51722">
    <property type="entry name" value="G_TR_2"/>
    <property type="match status" value="1"/>
</dbReference>
<dbReference type="PROSITE" id="PS01176">
    <property type="entry name" value="IF2"/>
    <property type="match status" value="1"/>
</dbReference>
<name>IF2_NITSB</name>